<name>ARCC2_ENTFA</name>
<keyword id="KW-0056">Arginine metabolism</keyword>
<keyword id="KW-0067">ATP-binding</keyword>
<keyword id="KW-0963">Cytoplasm</keyword>
<keyword id="KW-0418">Kinase</keyword>
<keyword id="KW-0547">Nucleotide-binding</keyword>
<keyword id="KW-1185">Reference proteome</keyword>
<keyword id="KW-0808">Transferase</keyword>
<organism>
    <name type="scientific">Enterococcus faecalis (strain ATCC 700802 / V583)</name>
    <dbReference type="NCBI Taxonomy" id="226185"/>
    <lineage>
        <taxon>Bacteria</taxon>
        <taxon>Bacillati</taxon>
        <taxon>Bacillota</taxon>
        <taxon>Bacilli</taxon>
        <taxon>Lactobacillales</taxon>
        <taxon>Enterococcaceae</taxon>
        <taxon>Enterococcus</taxon>
    </lineage>
</organism>
<evidence type="ECO:0000305" key="1"/>
<reference key="1">
    <citation type="journal article" date="2003" name="Science">
        <title>Role of mobile DNA in the evolution of vancomycin-resistant Enterococcus faecalis.</title>
        <authorList>
            <person name="Paulsen I.T."/>
            <person name="Banerjei L."/>
            <person name="Myers G.S.A."/>
            <person name="Nelson K.E."/>
            <person name="Seshadri R."/>
            <person name="Read T.D."/>
            <person name="Fouts D.E."/>
            <person name="Eisen J.A."/>
            <person name="Gill S.R."/>
            <person name="Heidelberg J.F."/>
            <person name="Tettelin H."/>
            <person name="Dodson R.J."/>
            <person name="Umayam L.A."/>
            <person name="Brinkac L.M."/>
            <person name="Beanan M.J."/>
            <person name="Daugherty S.C."/>
            <person name="DeBoy R.T."/>
            <person name="Durkin S.A."/>
            <person name="Kolonay J.F."/>
            <person name="Madupu R."/>
            <person name="Nelson W.C."/>
            <person name="Vamathevan J.J."/>
            <person name="Tran B."/>
            <person name="Upton J."/>
            <person name="Hansen T."/>
            <person name="Shetty J."/>
            <person name="Khouri H.M."/>
            <person name="Utterback T.R."/>
            <person name="Radune D."/>
            <person name="Ketchum K.A."/>
            <person name="Dougherty B.A."/>
            <person name="Fraser C.M."/>
        </authorList>
    </citation>
    <scope>NUCLEOTIDE SEQUENCE [LARGE SCALE GENOMIC DNA]</scope>
    <source>
        <strain>ATCC 700802 / V583</strain>
    </source>
</reference>
<feature type="chain" id="PRO_0000185123" description="Carbamate kinase 2">
    <location>
        <begin position="1"/>
        <end position="312"/>
    </location>
</feature>
<comment type="catalytic activity">
    <reaction>
        <text>hydrogencarbonate + NH4(+) + ATP = carbamoyl phosphate + ADP + H2O + H(+)</text>
        <dbReference type="Rhea" id="RHEA:10152"/>
        <dbReference type="ChEBI" id="CHEBI:15377"/>
        <dbReference type="ChEBI" id="CHEBI:15378"/>
        <dbReference type="ChEBI" id="CHEBI:17544"/>
        <dbReference type="ChEBI" id="CHEBI:28938"/>
        <dbReference type="ChEBI" id="CHEBI:30616"/>
        <dbReference type="ChEBI" id="CHEBI:58228"/>
        <dbReference type="ChEBI" id="CHEBI:456216"/>
        <dbReference type="EC" id="2.7.2.2"/>
    </reaction>
</comment>
<comment type="pathway">
    <text>Metabolic intermediate metabolism; carbamoyl phosphate degradation; CO(2) and NH(3) from carbamoyl phosphate: step 1/1.</text>
</comment>
<comment type="subcellular location">
    <subcellularLocation>
        <location evidence="1">Cytoplasm</location>
    </subcellularLocation>
</comment>
<comment type="similarity">
    <text evidence="1">Belongs to the carbamate kinase family.</text>
</comment>
<protein>
    <recommendedName>
        <fullName>Carbamate kinase 2</fullName>
        <ecNumber>2.7.2.2</ecNumber>
    </recommendedName>
</protein>
<gene>
    <name type="primary">arcC2</name>
    <name type="synonym">arcC-2</name>
    <name type="ordered locus">EF_0386</name>
</gene>
<proteinExistence type="inferred from homology"/>
<dbReference type="EC" id="2.7.2.2"/>
<dbReference type="EMBL" id="AE016830">
    <property type="protein sequence ID" value="AAO80247.1"/>
    <property type="molecule type" value="Genomic_DNA"/>
</dbReference>
<dbReference type="RefSeq" id="NP_814176.1">
    <property type="nucleotide sequence ID" value="NC_004668.1"/>
</dbReference>
<dbReference type="SMR" id="P59625"/>
<dbReference type="STRING" id="226185.EF_0386"/>
<dbReference type="EnsemblBacteria" id="AAO80247">
    <property type="protein sequence ID" value="AAO80247"/>
    <property type="gene ID" value="EF_0386"/>
</dbReference>
<dbReference type="KEGG" id="efa:EF0386"/>
<dbReference type="PATRIC" id="fig|226185.45.peg.2943"/>
<dbReference type="eggNOG" id="COG0549">
    <property type="taxonomic scope" value="Bacteria"/>
</dbReference>
<dbReference type="HOGENOM" id="CLU_076278_0_0_9"/>
<dbReference type="SABIO-RK" id="P59625"/>
<dbReference type="UniPathway" id="UPA00996">
    <property type="reaction ID" value="UER00366"/>
</dbReference>
<dbReference type="Proteomes" id="UP000001415">
    <property type="component" value="Chromosome"/>
</dbReference>
<dbReference type="GO" id="GO:0005829">
    <property type="term" value="C:cytosol"/>
    <property type="evidence" value="ECO:0007669"/>
    <property type="project" value="TreeGrafter"/>
</dbReference>
<dbReference type="GO" id="GO:0005524">
    <property type="term" value="F:ATP binding"/>
    <property type="evidence" value="ECO:0007669"/>
    <property type="project" value="UniProtKB-KW"/>
</dbReference>
<dbReference type="GO" id="GO:0008804">
    <property type="term" value="F:carbamate kinase activity"/>
    <property type="evidence" value="ECO:0007669"/>
    <property type="project" value="UniProtKB-EC"/>
</dbReference>
<dbReference type="GO" id="GO:0019546">
    <property type="term" value="P:arginine deiminase pathway"/>
    <property type="evidence" value="ECO:0007669"/>
    <property type="project" value="TreeGrafter"/>
</dbReference>
<dbReference type="CDD" id="cd04235">
    <property type="entry name" value="AAK_CK"/>
    <property type="match status" value="1"/>
</dbReference>
<dbReference type="FunFam" id="3.40.1160.10:FF:000007">
    <property type="entry name" value="Carbamate kinase"/>
    <property type="match status" value="1"/>
</dbReference>
<dbReference type="Gene3D" id="3.40.1160.10">
    <property type="entry name" value="Acetylglutamate kinase-like"/>
    <property type="match status" value="1"/>
</dbReference>
<dbReference type="InterPro" id="IPR036393">
    <property type="entry name" value="AceGlu_kinase-like_sf"/>
</dbReference>
<dbReference type="InterPro" id="IPR001048">
    <property type="entry name" value="Asp/Glu/Uridylate_kinase"/>
</dbReference>
<dbReference type="InterPro" id="IPR003964">
    <property type="entry name" value="Carb_kinase"/>
</dbReference>
<dbReference type="NCBIfam" id="TIGR00746">
    <property type="entry name" value="arcC"/>
    <property type="match status" value="1"/>
</dbReference>
<dbReference type="NCBIfam" id="NF009007">
    <property type="entry name" value="PRK12352.1"/>
    <property type="match status" value="1"/>
</dbReference>
<dbReference type="PANTHER" id="PTHR30409">
    <property type="entry name" value="CARBAMATE KINASE"/>
    <property type="match status" value="1"/>
</dbReference>
<dbReference type="PANTHER" id="PTHR30409:SF1">
    <property type="entry name" value="CARBAMATE KINASE-RELATED"/>
    <property type="match status" value="1"/>
</dbReference>
<dbReference type="Pfam" id="PF00696">
    <property type="entry name" value="AA_kinase"/>
    <property type="match status" value="1"/>
</dbReference>
<dbReference type="PIRSF" id="PIRSF000723">
    <property type="entry name" value="Carbamate_kin"/>
    <property type="match status" value="1"/>
</dbReference>
<dbReference type="PRINTS" id="PR01469">
    <property type="entry name" value="CARBMTKINASE"/>
</dbReference>
<dbReference type="SUPFAM" id="SSF53633">
    <property type="entry name" value="Carbamate kinase-like"/>
    <property type="match status" value="1"/>
</dbReference>
<accession>P59625</accession>
<sequence length="312" mass="33572">MSLNVIALGGNAILDTDPTDEGQKAVVNHAAKYIAEFVAKGEQVIVCHGNGPQVGNLLLQQKAGESEKNPALKLDTCVAMTQGSIGYWLQNALTNEFEKRNIAKPVISVVTQVRVDKEDPSFKKPSKPIGPFYTKEEADAEAAKDGSTYVEDAGRGYRKVVPSPMPKEIVEKEAVRALVEADVLTICSGGGGIPVVAEDGQYVGVEAVNDKDFSARVLAENVDADRLIILTGVDNIYINYNQPDQKALEQISVAEAEEYIKEGHFAAGSMLPKIEAALDFVKGDDKRKAIITSIENLENIDKEAGTVISQKG</sequence>